<comment type="similarity">
    <text evidence="1">Belongs to the UPF0473 family.</text>
</comment>
<organism>
    <name type="scientific">Clostridium botulinum (strain 657 / Type Ba4)</name>
    <dbReference type="NCBI Taxonomy" id="515621"/>
    <lineage>
        <taxon>Bacteria</taxon>
        <taxon>Bacillati</taxon>
        <taxon>Bacillota</taxon>
        <taxon>Clostridia</taxon>
        <taxon>Eubacteriales</taxon>
        <taxon>Clostridiaceae</taxon>
        <taxon>Clostridium</taxon>
    </lineage>
</organism>
<sequence>MDNNVDTITLTDEEGKETEFEVITKLDIEDKEYVVVVPKNEEVDEAIALRIDNNDNGEEMLVPVEEDEEFNMVAEAYELLFSEE</sequence>
<dbReference type="EMBL" id="CP001083">
    <property type="protein sequence ID" value="ACQ54723.1"/>
    <property type="molecule type" value="Genomic_DNA"/>
</dbReference>
<dbReference type="RefSeq" id="WP_004441619.1">
    <property type="nucleotide sequence ID" value="NC_012658.1"/>
</dbReference>
<dbReference type="SMR" id="C3L147"/>
<dbReference type="KEGG" id="cbi:CLJ_B2791"/>
<dbReference type="HOGENOM" id="CLU_146610_8_0_9"/>
<dbReference type="Proteomes" id="UP000002333">
    <property type="component" value="Chromosome"/>
</dbReference>
<dbReference type="HAMAP" id="MF_01448">
    <property type="entry name" value="UPF0473"/>
    <property type="match status" value="1"/>
</dbReference>
<dbReference type="InterPro" id="IPR009711">
    <property type="entry name" value="UPF0473"/>
</dbReference>
<dbReference type="PANTHER" id="PTHR40066">
    <property type="entry name" value="UPF0473 PROTEIN CBO2561/CLC_2432"/>
    <property type="match status" value="1"/>
</dbReference>
<dbReference type="PANTHER" id="PTHR40066:SF1">
    <property type="entry name" value="UPF0473 PROTEIN CBO2561_CLC_2432"/>
    <property type="match status" value="1"/>
</dbReference>
<dbReference type="Pfam" id="PF06949">
    <property type="entry name" value="DUF1292"/>
    <property type="match status" value="1"/>
</dbReference>
<reference key="1">
    <citation type="submission" date="2008-05" db="EMBL/GenBank/DDBJ databases">
        <title>Genome sequence of Clostridium botulinum Ba4 strain 657.</title>
        <authorList>
            <person name="Shrivastava S."/>
            <person name="Brown J.L."/>
            <person name="Bruce D."/>
            <person name="Detter C."/>
            <person name="Munk C."/>
            <person name="Smith L.A."/>
            <person name="Smith T.J."/>
            <person name="Sutton G."/>
            <person name="Brettin T.S."/>
        </authorList>
    </citation>
    <scope>NUCLEOTIDE SEQUENCE [LARGE SCALE GENOMIC DNA]</scope>
    <source>
        <strain>657 / Type Ba4</strain>
    </source>
</reference>
<proteinExistence type="inferred from homology"/>
<evidence type="ECO:0000255" key="1">
    <source>
        <dbReference type="HAMAP-Rule" id="MF_01448"/>
    </source>
</evidence>
<name>Y2791_CLOB6</name>
<feature type="chain" id="PRO_1000215321" description="UPF0473 protein CLJ_B2791">
    <location>
        <begin position="1"/>
        <end position="84"/>
    </location>
</feature>
<gene>
    <name type="ordered locus">CLJ_B2791</name>
</gene>
<protein>
    <recommendedName>
        <fullName evidence="1">UPF0473 protein CLJ_B2791</fullName>
    </recommendedName>
</protein>
<accession>C3L147</accession>